<accession>O46905</accession>
<evidence type="ECO:0000250" key="1"/>
<evidence type="ECO:0000305" key="2"/>
<organism>
    <name type="scientific">Guillardia theta</name>
    <name type="common">Cryptophyte</name>
    <name type="synonym">Cryptomonas phi</name>
    <dbReference type="NCBI Taxonomy" id="55529"/>
    <lineage>
        <taxon>Eukaryota</taxon>
        <taxon>Cryptophyceae</taxon>
        <taxon>Pyrenomonadales</taxon>
        <taxon>Geminigeraceae</taxon>
        <taxon>Guillardia</taxon>
    </lineage>
</organism>
<geneLocation type="chloroplast"/>
<sequence>MTIKQGDKVQVIAGSYKGEITEVLKVIRKSNSLILKNINIKNKHVKPKKEGEVGQIKQFEAPIHRSNVMLYDEESQIRSRSKFIISQDGKKVRVLKKLVKN</sequence>
<keyword id="KW-0150">Chloroplast</keyword>
<keyword id="KW-0934">Plastid</keyword>
<keyword id="KW-0687">Ribonucleoprotein</keyword>
<keyword id="KW-0689">Ribosomal protein</keyword>
<keyword id="KW-0694">RNA-binding</keyword>
<keyword id="KW-0699">rRNA-binding</keyword>
<dbReference type="EMBL" id="AF041468">
    <property type="protein sequence ID" value="AAC35714.1"/>
    <property type="molecule type" value="Genomic_DNA"/>
</dbReference>
<dbReference type="RefSeq" id="NP_050780.1">
    <property type="nucleotide sequence ID" value="NC_000926.1"/>
</dbReference>
<dbReference type="SMR" id="O46905"/>
<dbReference type="GeneID" id="857088"/>
<dbReference type="HOGENOM" id="CLU_093315_2_0_1"/>
<dbReference type="OMA" id="HPQGAII"/>
<dbReference type="GO" id="GO:0009507">
    <property type="term" value="C:chloroplast"/>
    <property type="evidence" value="ECO:0007669"/>
    <property type="project" value="UniProtKB-SubCell"/>
</dbReference>
<dbReference type="GO" id="GO:1990904">
    <property type="term" value="C:ribonucleoprotein complex"/>
    <property type="evidence" value="ECO:0007669"/>
    <property type="project" value="UniProtKB-KW"/>
</dbReference>
<dbReference type="GO" id="GO:0005840">
    <property type="term" value="C:ribosome"/>
    <property type="evidence" value="ECO:0007669"/>
    <property type="project" value="UniProtKB-KW"/>
</dbReference>
<dbReference type="GO" id="GO:0019843">
    <property type="term" value="F:rRNA binding"/>
    <property type="evidence" value="ECO:0007669"/>
    <property type="project" value="UniProtKB-UniRule"/>
</dbReference>
<dbReference type="GO" id="GO:0003735">
    <property type="term" value="F:structural constituent of ribosome"/>
    <property type="evidence" value="ECO:0007669"/>
    <property type="project" value="InterPro"/>
</dbReference>
<dbReference type="GO" id="GO:0006412">
    <property type="term" value="P:translation"/>
    <property type="evidence" value="ECO:0007669"/>
    <property type="project" value="UniProtKB-UniRule"/>
</dbReference>
<dbReference type="CDD" id="cd06089">
    <property type="entry name" value="KOW_RPL26"/>
    <property type="match status" value="1"/>
</dbReference>
<dbReference type="Gene3D" id="2.30.30.30">
    <property type="match status" value="1"/>
</dbReference>
<dbReference type="HAMAP" id="MF_01326_B">
    <property type="entry name" value="Ribosomal_uL24_B"/>
    <property type="match status" value="1"/>
</dbReference>
<dbReference type="InterPro" id="IPR005824">
    <property type="entry name" value="KOW"/>
</dbReference>
<dbReference type="InterPro" id="IPR014722">
    <property type="entry name" value="Rib_uL2_dom2"/>
</dbReference>
<dbReference type="InterPro" id="IPR003256">
    <property type="entry name" value="Ribosomal_uL24"/>
</dbReference>
<dbReference type="InterPro" id="IPR041988">
    <property type="entry name" value="Ribosomal_uL24_KOW"/>
</dbReference>
<dbReference type="InterPro" id="IPR008991">
    <property type="entry name" value="Translation_prot_SH3-like_sf"/>
</dbReference>
<dbReference type="NCBIfam" id="TIGR01079">
    <property type="entry name" value="rplX_bact"/>
    <property type="match status" value="1"/>
</dbReference>
<dbReference type="PANTHER" id="PTHR12903">
    <property type="entry name" value="MITOCHONDRIAL RIBOSOMAL PROTEIN L24"/>
    <property type="match status" value="1"/>
</dbReference>
<dbReference type="Pfam" id="PF00467">
    <property type="entry name" value="KOW"/>
    <property type="match status" value="1"/>
</dbReference>
<dbReference type="Pfam" id="PF17136">
    <property type="entry name" value="ribosomal_L24"/>
    <property type="match status" value="1"/>
</dbReference>
<dbReference type="SMART" id="SM00739">
    <property type="entry name" value="KOW"/>
    <property type="match status" value="1"/>
</dbReference>
<dbReference type="SUPFAM" id="SSF50104">
    <property type="entry name" value="Translation proteins SH3-like domain"/>
    <property type="match status" value="1"/>
</dbReference>
<feature type="chain" id="PRO_0000130762" description="Large ribosomal subunit protein uL24c">
    <location>
        <begin position="1"/>
        <end position="101"/>
    </location>
</feature>
<reference key="1">
    <citation type="journal article" date="1997" name="Biochem. Mol. Biol. Int.">
        <title>The large ribosomal protein gene cluster of a cryptomonad plastid: gene organization, sequence and evolutionary implications.</title>
        <authorList>
            <person name="Wang S.L."/>
            <person name="Liu X.-Q."/>
            <person name="Douglas S.E."/>
        </authorList>
    </citation>
    <scope>NUCLEOTIDE SEQUENCE [GENOMIC DNA]</scope>
</reference>
<reference key="2">
    <citation type="journal article" date="1999" name="J. Mol. Evol.">
        <title>The plastid genome of the cryptophyte alga, Guillardia theta: complete sequence and conserved synteny groups confirm its common ancestry with red algae.</title>
        <authorList>
            <person name="Douglas S.E."/>
            <person name="Penny S.L."/>
        </authorList>
    </citation>
    <scope>NUCLEOTIDE SEQUENCE [LARGE SCALE GENOMIC DNA]</scope>
</reference>
<proteinExistence type="inferred from homology"/>
<protein>
    <recommendedName>
        <fullName evidence="2">Large ribosomal subunit protein uL24c</fullName>
    </recommendedName>
    <alternativeName>
        <fullName>50S ribosomal protein L24, chloroplastic</fullName>
    </alternativeName>
</protein>
<gene>
    <name type="primary">rpl24</name>
</gene>
<name>RK24_GUITH</name>
<comment type="function">
    <text evidence="1">One of two assembly initiator proteins, it binds directly to the 5'-end of the 23S rRNA, where it nucleates assembly of the 50S subunit.</text>
</comment>
<comment type="subunit">
    <text evidence="1">Part of the 50S ribosomal subunit.</text>
</comment>
<comment type="subcellular location">
    <subcellularLocation>
        <location>Plastid</location>
        <location>Chloroplast</location>
    </subcellularLocation>
</comment>
<comment type="similarity">
    <text evidence="2">Belongs to the universal ribosomal protein uL24 family.</text>
</comment>